<organism>
    <name type="scientific">Nandinia binotata</name>
    <name type="common">African palm civet</name>
    <dbReference type="NCBI Taxonomy" id="71115"/>
    <lineage>
        <taxon>Eukaryota</taxon>
        <taxon>Metazoa</taxon>
        <taxon>Chordata</taxon>
        <taxon>Craniata</taxon>
        <taxon>Vertebrata</taxon>
        <taxon>Euteleostomi</taxon>
        <taxon>Mammalia</taxon>
        <taxon>Eutheria</taxon>
        <taxon>Laurasiatheria</taxon>
        <taxon>Carnivora</taxon>
        <taxon>Feliformia</taxon>
        <taxon>Nandiniidae</taxon>
        <taxon>Nandinia</taxon>
    </lineage>
</organism>
<sequence length="347" mass="39065">MKPPILIIILSTVISGTMIVLTSSHWLLTWIGFEMNMLAIIPILMKKFNPRAMEASTKYFLTQATASMLLMMGIIINLLYSGQWTVSKNLHPMASTMMTIAMTMKLGLAPFHFWVPEVTQGIPLSSGMILLTWQKIAPLSVLYQISPSINTNLLMTMATMSVLIGGWGGLNQTQLRKILAYSSIAHMGWMVAIMTYNPTVMILNLMMYIMMTLTSFMLFIHTSATTTLSLSHTWNKTPLITSFILVLMLSLGGLPPLSGFIPKWMIIQELTKNEMIILPTLLAITALLNLYFYMRLTYATALTMFPSTNNMKMKWQFERTKKMALLPPLIIISTMLLPLTPMMSILD</sequence>
<reference key="1">
    <citation type="journal article" date="2003" name="Nature">
        <title>Single origin of Malagasy Carnivora from an African ancestor.</title>
        <authorList>
            <person name="Yoder A.D."/>
            <person name="Burns M.M."/>
            <person name="Zehr S."/>
            <person name="Delefosse T."/>
            <person name="Veron G."/>
            <person name="Goodman S.M."/>
            <person name="Flynn J.J."/>
        </authorList>
    </citation>
    <scope>NUCLEOTIDE SEQUENCE [GENOMIC DNA]</scope>
</reference>
<protein>
    <recommendedName>
        <fullName evidence="1">NADH-ubiquinone oxidoreductase chain 2</fullName>
        <ecNumber evidence="1">7.1.1.2</ecNumber>
    </recommendedName>
    <alternativeName>
        <fullName>NADH dehydrogenase subunit 2</fullName>
    </alternativeName>
</protein>
<comment type="function">
    <text evidence="1">Core subunit of the mitochondrial membrane respiratory chain NADH dehydrogenase (Complex I) which catalyzes electron transfer from NADH through the respiratory chain, using ubiquinone as an electron acceptor. Essential for the catalytic activity and assembly of complex I.</text>
</comment>
<comment type="catalytic activity">
    <reaction evidence="1">
        <text>a ubiquinone + NADH + 5 H(+)(in) = a ubiquinol + NAD(+) + 4 H(+)(out)</text>
        <dbReference type="Rhea" id="RHEA:29091"/>
        <dbReference type="Rhea" id="RHEA-COMP:9565"/>
        <dbReference type="Rhea" id="RHEA-COMP:9566"/>
        <dbReference type="ChEBI" id="CHEBI:15378"/>
        <dbReference type="ChEBI" id="CHEBI:16389"/>
        <dbReference type="ChEBI" id="CHEBI:17976"/>
        <dbReference type="ChEBI" id="CHEBI:57540"/>
        <dbReference type="ChEBI" id="CHEBI:57945"/>
        <dbReference type="EC" id="7.1.1.2"/>
    </reaction>
</comment>
<comment type="subunit">
    <text evidence="1 2">Core subunit of respiratory chain NADH dehydrogenase (Complex I) which is composed of 45 different subunits. Interacts with TMEM242 (By similarity).</text>
</comment>
<comment type="subcellular location">
    <subcellularLocation>
        <location evidence="2">Mitochondrion inner membrane</location>
        <topology evidence="3">Multi-pass membrane protein</topology>
    </subcellularLocation>
</comment>
<comment type="similarity">
    <text evidence="4">Belongs to the complex I subunit 2 family.</text>
</comment>
<gene>
    <name evidence="1" type="primary">MT-ND2</name>
    <name type="synonym">MTND2</name>
    <name type="synonym">NADH2</name>
    <name type="synonym">ND2</name>
</gene>
<evidence type="ECO:0000250" key="1">
    <source>
        <dbReference type="UniProtKB" id="P03891"/>
    </source>
</evidence>
<evidence type="ECO:0000250" key="2">
    <source>
        <dbReference type="UniProtKB" id="P03892"/>
    </source>
</evidence>
<evidence type="ECO:0000255" key="3"/>
<evidence type="ECO:0000305" key="4"/>
<dbReference type="EC" id="7.1.1.2" evidence="1"/>
<dbReference type="EMBL" id="AY170053">
    <property type="protein sequence ID" value="AAN84587.1"/>
    <property type="molecule type" value="Genomic_DNA"/>
</dbReference>
<dbReference type="SMR" id="Q85PQ3"/>
<dbReference type="GO" id="GO:0005743">
    <property type="term" value="C:mitochondrial inner membrane"/>
    <property type="evidence" value="ECO:0000250"/>
    <property type="project" value="UniProtKB"/>
</dbReference>
<dbReference type="GO" id="GO:0008137">
    <property type="term" value="F:NADH dehydrogenase (ubiquinone) activity"/>
    <property type="evidence" value="ECO:0000250"/>
    <property type="project" value="UniProtKB"/>
</dbReference>
<dbReference type="GO" id="GO:0006120">
    <property type="term" value="P:mitochondrial electron transport, NADH to ubiquinone"/>
    <property type="evidence" value="ECO:0000250"/>
    <property type="project" value="UniProtKB"/>
</dbReference>
<dbReference type="GO" id="GO:0032981">
    <property type="term" value="P:mitochondrial respiratory chain complex I assembly"/>
    <property type="evidence" value="ECO:0000250"/>
    <property type="project" value="UniProtKB"/>
</dbReference>
<dbReference type="InterPro" id="IPR050175">
    <property type="entry name" value="Complex_I_Subunit_2"/>
</dbReference>
<dbReference type="InterPro" id="IPR010933">
    <property type="entry name" value="NADH_DH_su2_C"/>
</dbReference>
<dbReference type="InterPro" id="IPR003917">
    <property type="entry name" value="NADH_UbQ_OxRdtase_chain2"/>
</dbReference>
<dbReference type="InterPro" id="IPR001750">
    <property type="entry name" value="ND/Mrp_TM"/>
</dbReference>
<dbReference type="PANTHER" id="PTHR46552">
    <property type="entry name" value="NADH-UBIQUINONE OXIDOREDUCTASE CHAIN 2"/>
    <property type="match status" value="1"/>
</dbReference>
<dbReference type="PANTHER" id="PTHR46552:SF1">
    <property type="entry name" value="NADH-UBIQUINONE OXIDOREDUCTASE CHAIN 2"/>
    <property type="match status" value="1"/>
</dbReference>
<dbReference type="Pfam" id="PF06444">
    <property type="entry name" value="NADH_dehy_S2_C"/>
    <property type="match status" value="1"/>
</dbReference>
<dbReference type="Pfam" id="PF00361">
    <property type="entry name" value="Proton_antipo_M"/>
    <property type="match status" value="1"/>
</dbReference>
<dbReference type="PRINTS" id="PR01436">
    <property type="entry name" value="NADHDHGNASE2"/>
</dbReference>
<accession>Q85PQ3</accession>
<name>NU2M_NANBI</name>
<feature type="chain" id="PRO_0000117611" description="NADH-ubiquinone oxidoreductase chain 2">
    <location>
        <begin position="1"/>
        <end position="347"/>
    </location>
</feature>
<feature type="transmembrane region" description="Helical" evidence="3">
    <location>
        <begin position="3"/>
        <end position="23"/>
    </location>
</feature>
<feature type="transmembrane region" description="Helical" evidence="3">
    <location>
        <begin position="25"/>
        <end position="45"/>
    </location>
</feature>
<feature type="transmembrane region" description="Helical" evidence="3">
    <location>
        <begin position="59"/>
        <end position="79"/>
    </location>
</feature>
<feature type="transmembrane region" description="Helical" evidence="3">
    <location>
        <begin position="93"/>
        <end position="115"/>
    </location>
</feature>
<feature type="transmembrane region" description="Helical" evidence="3">
    <location>
        <begin position="149"/>
        <end position="169"/>
    </location>
</feature>
<feature type="transmembrane region" description="Helical" evidence="3">
    <location>
        <begin position="178"/>
        <end position="198"/>
    </location>
</feature>
<feature type="transmembrane region" description="Helical" evidence="3">
    <location>
        <begin position="200"/>
        <end position="220"/>
    </location>
</feature>
<feature type="transmembrane region" description="Helical" evidence="3">
    <location>
        <begin position="242"/>
        <end position="262"/>
    </location>
</feature>
<feature type="transmembrane region" description="Helical" evidence="3">
    <location>
        <begin position="274"/>
        <end position="294"/>
    </location>
</feature>
<feature type="transmembrane region" description="Helical" evidence="3">
    <location>
        <begin position="323"/>
        <end position="343"/>
    </location>
</feature>
<geneLocation type="mitochondrion"/>
<keyword id="KW-0249">Electron transport</keyword>
<keyword id="KW-0472">Membrane</keyword>
<keyword id="KW-0496">Mitochondrion</keyword>
<keyword id="KW-0999">Mitochondrion inner membrane</keyword>
<keyword id="KW-0520">NAD</keyword>
<keyword id="KW-0679">Respiratory chain</keyword>
<keyword id="KW-1278">Translocase</keyword>
<keyword id="KW-0812">Transmembrane</keyword>
<keyword id="KW-1133">Transmembrane helix</keyword>
<keyword id="KW-0813">Transport</keyword>
<keyword id="KW-0830">Ubiquinone</keyword>
<proteinExistence type="inferred from homology"/>